<keyword id="KW-1185">Reference proteome</keyword>
<keyword id="KW-0687">Ribonucleoprotein</keyword>
<keyword id="KW-0689">Ribosomal protein</keyword>
<keyword id="KW-0694">RNA-binding</keyword>
<keyword id="KW-0699">rRNA-binding</keyword>
<reference key="1">
    <citation type="submission" date="2005-03" db="EMBL/GenBank/DDBJ databases">
        <title>Brevibacillus brevis strain 47, complete genome.</title>
        <authorList>
            <person name="Hosoyama A."/>
            <person name="Yamada R."/>
            <person name="Hongo Y."/>
            <person name="Terui Y."/>
            <person name="Ankai A."/>
            <person name="Masuyama W."/>
            <person name="Sekiguchi M."/>
            <person name="Takeda T."/>
            <person name="Asano K."/>
            <person name="Ohji S."/>
            <person name="Ichikawa N."/>
            <person name="Narita S."/>
            <person name="Aoki N."/>
            <person name="Miura H."/>
            <person name="Matsushita S."/>
            <person name="Sekigawa T."/>
            <person name="Yamagata H."/>
            <person name="Yoshikawa H."/>
            <person name="Udaka S."/>
            <person name="Tanikawa S."/>
            <person name="Fujita N."/>
        </authorList>
    </citation>
    <scope>NUCLEOTIDE SEQUENCE [LARGE SCALE GENOMIC DNA]</scope>
    <source>
        <strain>47 / JCM 6285 / NBRC 100599</strain>
    </source>
</reference>
<feature type="chain" id="PRO_1000125786" description="Small ribosomal subunit protein bS18">
    <location>
        <begin position="1"/>
        <end position="76"/>
    </location>
</feature>
<evidence type="ECO:0000255" key="1">
    <source>
        <dbReference type="HAMAP-Rule" id="MF_00270"/>
    </source>
</evidence>
<evidence type="ECO:0000305" key="2"/>
<name>RS18_BREBN</name>
<proteinExistence type="inferred from homology"/>
<dbReference type="EMBL" id="AP008955">
    <property type="protein sequence ID" value="BAH46899.1"/>
    <property type="molecule type" value="Genomic_DNA"/>
</dbReference>
<dbReference type="RefSeq" id="WP_007720187.1">
    <property type="nucleotide sequence ID" value="NC_012491.1"/>
</dbReference>
<dbReference type="SMR" id="C0ZA45"/>
<dbReference type="STRING" id="358681.BBR47_59220"/>
<dbReference type="GeneID" id="95752627"/>
<dbReference type="KEGG" id="bbe:BBR47_59220"/>
<dbReference type="eggNOG" id="COG0238">
    <property type="taxonomic scope" value="Bacteria"/>
</dbReference>
<dbReference type="HOGENOM" id="CLU_148710_2_2_9"/>
<dbReference type="Proteomes" id="UP000001877">
    <property type="component" value="Chromosome"/>
</dbReference>
<dbReference type="GO" id="GO:0022627">
    <property type="term" value="C:cytosolic small ribosomal subunit"/>
    <property type="evidence" value="ECO:0007669"/>
    <property type="project" value="TreeGrafter"/>
</dbReference>
<dbReference type="GO" id="GO:0070181">
    <property type="term" value="F:small ribosomal subunit rRNA binding"/>
    <property type="evidence" value="ECO:0007669"/>
    <property type="project" value="TreeGrafter"/>
</dbReference>
<dbReference type="GO" id="GO:0003735">
    <property type="term" value="F:structural constituent of ribosome"/>
    <property type="evidence" value="ECO:0007669"/>
    <property type="project" value="InterPro"/>
</dbReference>
<dbReference type="GO" id="GO:0006412">
    <property type="term" value="P:translation"/>
    <property type="evidence" value="ECO:0007669"/>
    <property type="project" value="UniProtKB-UniRule"/>
</dbReference>
<dbReference type="FunFam" id="4.10.640.10:FF:000003">
    <property type="entry name" value="30S ribosomal protein S18"/>
    <property type="match status" value="1"/>
</dbReference>
<dbReference type="Gene3D" id="4.10.640.10">
    <property type="entry name" value="Ribosomal protein S18"/>
    <property type="match status" value="1"/>
</dbReference>
<dbReference type="HAMAP" id="MF_00270">
    <property type="entry name" value="Ribosomal_bS18"/>
    <property type="match status" value="1"/>
</dbReference>
<dbReference type="InterPro" id="IPR001648">
    <property type="entry name" value="Ribosomal_bS18"/>
</dbReference>
<dbReference type="InterPro" id="IPR018275">
    <property type="entry name" value="Ribosomal_bS18_CS"/>
</dbReference>
<dbReference type="InterPro" id="IPR036870">
    <property type="entry name" value="Ribosomal_bS18_sf"/>
</dbReference>
<dbReference type="NCBIfam" id="TIGR00165">
    <property type="entry name" value="S18"/>
    <property type="match status" value="1"/>
</dbReference>
<dbReference type="PANTHER" id="PTHR13479">
    <property type="entry name" value="30S RIBOSOMAL PROTEIN S18"/>
    <property type="match status" value="1"/>
</dbReference>
<dbReference type="PANTHER" id="PTHR13479:SF40">
    <property type="entry name" value="SMALL RIBOSOMAL SUBUNIT PROTEIN BS18M"/>
    <property type="match status" value="1"/>
</dbReference>
<dbReference type="Pfam" id="PF01084">
    <property type="entry name" value="Ribosomal_S18"/>
    <property type="match status" value="1"/>
</dbReference>
<dbReference type="PRINTS" id="PR00974">
    <property type="entry name" value="RIBOSOMALS18"/>
</dbReference>
<dbReference type="SUPFAM" id="SSF46911">
    <property type="entry name" value="Ribosomal protein S18"/>
    <property type="match status" value="1"/>
</dbReference>
<dbReference type="PROSITE" id="PS00057">
    <property type="entry name" value="RIBOSOMAL_S18"/>
    <property type="match status" value="1"/>
</dbReference>
<accession>C0ZA45</accession>
<organism>
    <name type="scientific">Brevibacillus brevis (strain 47 / JCM 6285 / NBRC 100599)</name>
    <dbReference type="NCBI Taxonomy" id="358681"/>
    <lineage>
        <taxon>Bacteria</taxon>
        <taxon>Bacillati</taxon>
        <taxon>Bacillota</taxon>
        <taxon>Bacilli</taxon>
        <taxon>Bacillales</taxon>
        <taxon>Paenibacillaceae</taxon>
        <taxon>Brevibacillus</taxon>
    </lineage>
</organism>
<gene>
    <name evidence="1" type="primary">rpsR</name>
    <name type="ordered locus">BBR47_59220</name>
</gene>
<protein>
    <recommendedName>
        <fullName evidence="1">Small ribosomal subunit protein bS18</fullName>
    </recommendedName>
    <alternativeName>
        <fullName evidence="2">30S ribosomal protein S18</fullName>
    </alternativeName>
</protein>
<comment type="function">
    <text evidence="1">Binds as a heterodimer with protein bS6 to the central domain of the 16S rRNA, where it helps stabilize the platform of the 30S subunit.</text>
</comment>
<comment type="subunit">
    <text evidence="1">Part of the 30S ribosomal subunit. Forms a tight heterodimer with protein bS6.</text>
</comment>
<comment type="similarity">
    <text evidence="1">Belongs to the bacterial ribosomal protein bS18 family.</text>
</comment>
<sequence length="76" mass="8931">MARKGRPNKRRKVCFFKVNKIKHIDYKDIDLLKKFISERGKILPRRVTGTSAKYQRALTIAIKRSRQVALLPYTAE</sequence>